<organismHost>
    <name type="scientific">Homo sapiens</name>
    <name type="common">Human</name>
    <dbReference type="NCBI Taxonomy" id="9606"/>
</organismHost>
<keyword id="KW-0014">AIDS</keyword>
<keyword id="KW-1035">Host cytoplasm</keyword>
<keyword id="KW-1048">Host nucleus</keyword>
<keyword id="KW-0945">Host-virus interaction</keyword>
<keyword id="KW-0488">Methylation</keyword>
<keyword id="KW-0509">mRNA transport</keyword>
<keyword id="KW-0597">Phosphoprotein</keyword>
<keyword id="KW-1185">Reference proteome</keyword>
<keyword id="KW-0694">RNA-binding</keyword>
<keyword id="KW-0813">Transport</keyword>
<reference key="1">
    <citation type="journal article" date="1996" name="AIDS Res. Hum. Retroviruses">
        <title>Full-length sequence of an ethiopian human immunodeficiency virus type 1 (HIV-1) isolate of genetic subtype C.</title>
        <authorList>
            <person name="Salminen M.O."/>
            <person name="Johansson B."/>
            <person name="Sonnerborg A."/>
            <person name="Ayehunie S."/>
            <person name="Gotte D."/>
            <person name="Leinikki P."/>
            <person name="Burke D.S."/>
            <person name="McCutchan F.E."/>
        </authorList>
    </citation>
    <scope>NUCLEOTIDE SEQUENCE [GENOMIC DNA]</scope>
    <source>
        <strain>C2220</strain>
    </source>
</reference>
<reference key="2">
    <citation type="journal article" date="1999" name="Arch. Biochem. Biophys.">
        <title>The ins and outs of HIV Rev.</title>
        <authorList>
            <person name="Hope T.J."/>
        </authorList>
    </citation>
    <scope>REVIEW</scope>
</reference>
<name>REV_HV1ET</name>
<feature type="chain" id="PRO_0000244999" description="Protein Rev">
    <location>
        <begin position="1"/>
        <end position="107"/>
    </location>
</feature>
<feature type="region of interest" description="Homomultimerization" evidence="1">
    <location>
        <begin position="18"/>
        <end position="26"/>
    </location>
</feature>
<feature type="region of interest" description="Disordered" evidence="2">
    <location>
        <begin position="26"/>
        <end position="48"/>
    </location>
</feature>
<feature type="region of interest" description="Disordered" evidence="2">
    <location>
        <begin position="81"/>
        <end position="107"/>
    </location>
</feature>
<feature type="short sequence motif" description="Nuclear localization signal and RNA-binding (RRE)" evidence="1">
    <location>
        <begin position="34"/>
        <end position="50"/>
    </location>
</feature>
<feature type="short sequence motif" description="Nuclear export signal and binding to XPO1" evidence="1">
    <location>
        <begin position="73"/>
        <end position="84"/>
    </location>
</feature>
<feature type="compositionally biased region" description="Basic residues" evidence="2">
    <location>
        <begin position="36"/>
        <end position="48"/>
    </location>
</feature>
<feature type="compositionally biased region" description="Low complexity" evidence="2">
    <location>
        <begin position="89"/>
        <end position="101"/>
    </location>
</feature>
<feature type="modified residue" description="Phosphoserine; by host CK2" evidence="1">
    <location>
        <position position="5"/>
    </location>
</feature>
<feature type="modified residue" description="Phosphoserine; by host CK2" evidence="1">
    <location>
        <position position="8"/>
    </location>
</feature>
<feature type="modified residue" description="Phosphoserine; by host" evidence="1">
    <location>
        <position position="92"/>
    </location>
</feature>
<organism>
    <name type="scientific">Human immunodeficiency virus type 1 group M subtype C (isolate ETH2220)</name>
    <name type="common">HIV-1</name>
    <dbReference type="NCBI Taxonomy" id="388796"/>
    <lineage>
        <taxon>Viruses</taxon>
        <taxon>Riboviria</taxon>
        <taxon>Pararnavirae</taxon>
        <taxon>Artverviricota</taxon>
        <taxon>Revtraviricetes</taxon>
        <taxon>Ortervirales</taxon>
        <taxon>Retroviridae</taxon>
        <taxon>Orthoretrovirinae</taxon>
        <taxon>Lentivirus</taxon>
        <taxon>Human immunodeficiency virus type 1</taxon>
    </lineage>
</organism>
<accession>Q75006</accession>
<gene>
    <name evidence="1" type="primary">rev</name>
</gene>
<sequence length="107" mass="12080">MAGRSGDSDEELLKAVRIIKILYQSNPYPTPEGTRQARRNRRRRWRARQRQIHTLSERILSNFLGRPAEPVPLQLPPLERLNLDCSEDSGTSGTQQSQGTTEGVGNP</sequence>
<comment type="function">
    <text evidence="1">Escorts unspliced or incompletely spliced viral pre-mRNAs (late transcripts) out of the nucleus of infected cells. These pre-mRNAs carry a recognition sequence called Rev responsive element (RRE) located in the env gene, that is not present in fully spliced viral mRNAs (early transcripts). This function is essential since most viral proteins are translated from unspliced or partially spliced pre-mRNAs which cannot exit the nucleus by the pathway used by fully processed cellular mRNAs. Rev itself is translated from a fully spliced mRNA that readily exits the nucleus. Rev's nuclear localization signal (NLS) binds directly to KPNB1/Importin beta-1 without previous binding to KPNA1/Importin alpha-1. KPNB1 binds to the GDP bound form of RAN (Ran-GDP) and targets Rev to the nucleus. In the nucleus, the conversion from Ran-GDP to Ran-GTP dissociates Rev from KPNB1 and allows Rev's binding to the RRE in viral pre-mRNAs. Rev multimerization on the RRE via cooperative assembly exposes its nuclear export signal (NES) to the surface. Rev can then form a complex with XPO1/CRM1 and Ran-GTP, leading to nuclear export of the complex. Conversion from Ran-GTP to Ran-GDP mediates dissociation of the Rev/RRE/XPO1/RAN complex, so that Rev can return to the nucleus for a subsequent round of export. Beside KPNB1, also seems to interact with TNPO1/Transportin-1, RANBP5/IPO5 and IPO7/RANBP7 for nuclear import. The nucleoporin-like HRB/RIP is an essential cofactor that probably indirectly interacts with Rev to release HIV RNAs from the perinuclear region to the cytoplasm.</text>
</comment>
<comment type="subunit">
    <text evidence="1">Homomultimer; when bound to the RRE. Multimeric assembly is essential for activity and may involve XPO1. Binds to human KPNB1, XPO1, TNPO1, RANBP5 and IPO7. Interacts with the viral Integrase. Interacts with human KHDRBS1. Interacts with human NAP1; this interaction decreases Rev multimerization and stimulates its activity. Interacts with human DEAD-box helicases DDX3 and DDX24; these interactions may serve for viral RNA export to the cytoplasm and packaging, respectively. Interacts with human PSIP1; this interaction may inhibit HIV-1 DNA integration by promoting dissociation of the Integrase-LEDGF/p75 complex.</text>
</comment>
<comment type="subcellular location">
    <subcellularLocation>
        <location evidence="1">Host nucleus</location>
        <location evidence="1">Host nucleolus</location>
    </subcellularLocation>
    <subcellularLocation>
        <location evidence="1">Host cytoplasm</location>
    </subcellularLocation>
    <text evidence="1">The presence of both nuclear import and nuclear export signals leads to continuous shuttling between the nucleus and cytoplasm.</text>
</comment>
<comment type="domain">
    <text evidence="1">The RNA-binding motif binds to the RRE, a 240 bp stem-and-loop structure present in incompletely spliced viral pre-mRNAs. This region also contains the NLS which mediates nuclear localization via KPNB1 binding and, when the N-terminal sequence is present, nucleolar targeting. These overlapping functions prevent Rev bound to RRE from undesirable return to the nucleus. When Rev binds the RRE, the NLS becomes masked while the NES remains accessible. The leucine-rich NES mediates binding to human XPO1.</text>
</comment>
<comment type="PTM">
    <text evidence="1">Asymmetrically arginine dimethylated at one site by host PRMT6. Methylation impairs the RNA-binding activity and export of viral RNA from the nucleus to the cytoplasm.</text>
</comment>
<comment type="PTM">
    <text evidence="1">Phosphorylated by protein kinase CK2. Presence of, and maybe binding to the N-terminus of the regulatory beta subunit of CK2 is necessary for CK2-mediated Rev's phosphorylation.</text>
</comment>
<comment type="miscellaneous">
    <text evidence="1">HIV-1 lineages are divided in three main groups, M (for Major), O (for Outlier), and N (for New, or Non-M, Non-O). The vast majority of strains found worldwide belong to the group M. Group O seems to be endemic to and largely confined to Cameroon and neighboring countries in West Central Africa, where these viruses represent a small minority of HIV-1 strains. The group N is represented by a limited number of isolates from Cameroonian persons. The group M is further subdivided in 9 clades or subtypes (A to D, F to H, J and K).</text>
</comment>
<comment type="similarity">
    <text evidence="1">Belongs to the HIV-1 REV protein family.</text>
</comment>
<protein>
    <recommendedName>
        <fullName evidence="1">Protein Rev</fullName>
    </recommendedName>
    <alternativeName>
        <fullName evidence="1">ART/TRS</fullName>
    </alternativeName>
    <alternativeName>
        <fullName evidence="1">Anti-repression transactivator</fullName>
    </alternativeName>
    <alternativeName>
        <fullName evidence="1">Regulator of expression of viral proteins</fullName>
    </alternativeName>
</protein>
<proteinExistence type="inferred from homology"/>
<dbReference type="EMBL" id="U46016">
    <property type="protein sequence ID" value="AAB36505.1"/>
    <property type="molecule type" value="Genomic_DNA"/>
</dbReference>
<dbReference type="Proteomes" id="UP000007694">
    <property type="component" value="Segment"/>
</dbReference>
<dbReference type="GO" id="GO:0030430">
    <property type="term" value="C:host cell cytoplasm"/>
    <property type="evidence" value="ECO:0007669"/>
    <property type="project" value="UniProtKB-SubCell"/>
</dbReference>
<dbReference type="GO" id="GO:0044196">
    <property type="term" value="C:host cell nucleolus"/>
    <property type="evidence" value="ECO:0007669"/>
    <property type="project" value="UniProtKB-SubCell"/>
</dbReference>
<dbReference type="GO" id="GO:0003700">
    <property type="term" value="F:DNA-binding transcription factor activity"/>
    <property type="evidence" value="ECO:0007669"/>
    <property type="project" value="UniProtKB-UniRule"/>
</dbReference>
<dbReference type="GO" id="GO:0003723">
    <property type="term" value="F:RNA binding"/>
    <property type="evidence" value="ECO:0007669"/>
    <property type="project" value="UniProtKB-UniRule"/>
</dbReference>
<dbReference type="GO" id="GO:0051028">
    <property type="term" value="P:mRNA transport"/>
    <property type="evidence" value="ECO:0007669"/>
    <property type="project" value="UniProtKB-UniRule"/>
</dbReference>
<dbReference type="GO" id="GO:0016032">
    <property type="term" value="P:viral process"/>
    <property type="evidence" value="ECO:0007669"/>
    <property type="project" value="UniProtKB-UniRule"/>
</dbReference>
<dbReference type="Gene3D" id="6.10.140.630">
    <property type="match status" value="1"/>
</dbReference>
<dbReference type="HAMAP" id="MF_04077">
    <property type="entry name" value="REV_HIV1"/>
    <property type="match status" value="1"/>
</dbReference>
<dbReference type="InterPro" id="IPR000625">
    <property type="entry name" value="REV_protein"/>
</dbReference>
<dbReference type="Pfam" id="PF00424">
    <property type="entry name" value="REV"/>
    <property type="match status" value="1"/>
</dbReference>
<evidence type="ECO:0000255" key="1">
    <source>
        <dbReference type="HAMAP-Rule" id="MF_04077"/>
    </source>
</evidence>
<evidence type="ECO:0000256" key="2">
    <source>
        <dbReference type="SAM" id="MobiDB-lite"/>
    </source>
</evidence>